<evidence type="ECO:0000255" key="1">
    <source>
        <dbReference type="HAMAP-Rule" id="MF_01008"/>
    </source>
</evidence>
<evidence type="ECO:0000255" key="2">
    <source>
        <dbReference type="PROSITE-ProRule" id="PRU01076"/>
    </source>
</evidence>
<evidence type="ECO:0000305" key="3"/>
<comment type="subunit">
    <text evidence="1">Forms oligomers.</text>
</comment>
<comment type="subcellular location">
    <subcellularLocation>
        <location evidence="1">Cytoplasm</location>
        <location evidence="1">Nucleoid</location>
    </subcellularLocation>
</comment>
<comment type="similarity">
    <text evidence="1">Belongs to the MraZ family.</text>
</comment>
<comment type="sequence caution" evidence="3">
    <conflict type="erroneous initiation">
        <sequence resource="EMBL-CDS" id="AAU23268"/>
    </conflict>
</comment>
<proteinExistence type="inferred from homology"/>
<keyword id="KW-0963">Cytoplasm</keyword>
<keyword id="KW-0238">DNA-binding</keyword>
<keyword id="KW-1185">Reference proteome</keyword>
<keyword id="KW-0677">Repeat</keyword>
<keyword id="KW-0804">Transcription</keyword>
<keyword id="KW-0805">Transcription regulation</keyword>
<feature type="chain" id="PRO_0000108457" description="Transcriptional regulator MraZ">
    <location>
        <begin position="1"/>
        <end position="143"/>
    </location>
</feature>
<feature type="domain" description="SpoVT-AbrB 1" evidence="2">
    <location>
        <begin position="5"/>
        <end position="47"/>
    </location>
</feature>
<feature type="domain" description="SpoVT-AbrB 2" evidence="2">
    <location>
        <begin position="76"/>
        <end position="119"/>
    </location>
</feature>
<sequence>MFMGEYQHTIDSKGRMIVPAKFREGLGEQFVLTRGLDQCLFGYPMSEWKLIEEKLKALPLTKKDARAFTRFFFSGATECELDKQGRINIASPLLNYAKLEKECVVIGVSNRIELWSKEIWEQYVEEQEDSFAEIAENMIGFDI</sequence>
<dbReference type="EMBL" id="AE017333">
    <property type="protein sequence ID" value="AAU40625.1"/>
    <property type="molecule type" value="Genomic_DNA"/>
</dbReference>
<dbReference type="EMBL" id="CP000002">
    <property type="protein sequence ID" value="AAU23268.1"/>
    <property type="status" value="ALT_INIT"/>
    <property type="molecule type" value="Genomic_DNA"/>
</dbReference>
<dbReference type="RefSeq" id="WP_009328555.1">
    <property type="nucleotide sequence ID" value="NC_006322.1"/>
</dbReference>
<dbReference type="SMR" id="Q65JY9"/>
<dbReference type="STRING" id="279010.BL00851"/>
<dbReference type="GeneID" id="92861676"/>
<dbReference type="KEGG" id="bld:BLi01730"/>
<dbReference type="KEGG" id="bli:BL00851"/>
<dbReference type="eggNOG" id="COG2001">
    <property type="taxonomic scope" value="Bacteria"/>
</dbReference>
<dbReference type="HOGENOM" id="CLU_107907_0_5_9"/>
<dbReference type="Proteomes" id="UP000000606">
    <property type="component" value="Chromosome"/>
</dbReference>
<dbReference type="GO" id="GO:0005737">
    <property type="term" value="C:cytoplasm"/>
    <property type="evidence" value="ECO:0007669"/>
    <property type="project" value="UniProtKB-UniRule"/>
</dbReference>
<dbReference type="GO" id="GO:0009295">
    <property type="term" value="C:nucleoid"/>
    <property type="evidence" value="ECO:0007669"/>
    <property type="project" value="UniProtKB-SubCell"/>
</dbReference>
<dbReference type="GO" id="GO:0003700">
    <property type="term" value="F:DNA-binding transcription factor activity"/>
    <property type="evidence" value="ECO:0007669"/>
    <property type="project" value="UniProtKB-UniRule"/>
</dbReference>
<dbReference type="GO" id="GO:0000976">
    <property type="term" value="F:transcription cis-regulatory region binding"/>
    <property type="evidence" value="ECO:0007669"/>
    <property type="project" value="TreeGrafter"/>
</dbReference>
<dbReference type="GO" id="GO:2000143">
    <property type="term" value="P:negative regulation of DNA-templated transcription initiation"/>
    <property type="evidence" value="ECO:0007669"/>
    <property type="project" value="TreeGrafter"/>
</dbReference>
<dbReference type="CDD" id="cd16321">
    <property type="entry name" value="MraZ_C"/>
    <property type="match status" value="1"/>
</dbReference>
<dbReference type="CDD" id="cd16320">
    <property type="entry name" value="MraZ_N"/>
    <property type="match status" value="1"/>
</dbReference>
<dbReference type="FunFam" id="3.40.1550.20:FF:000002">
    <property type="entry name" value="Transcriptional regulator MraZ"/>
    <property type="match status" value="1"/>
</dbReference>
<dbReference type="Gene3D" id="3.40.1550.20">
    <property type="entry name" value="Transcriptional regulator MraZ domain"/>
    <property type="match status" value="1"/>
</dbReference>
<dbReference type="HAMAP" id="MF_01008">
    <property type="entry name" value="MraZ"/>
    <property type="match status" value="1"/>
</dbReference>
<dbReference type="InterPro" id="IPR003444">
    <property type="entry name" value="MraZ"/>
</dbReference>
<dbReference type="InterPro" id="IPR035644">
    <property type="entry name" value="MraZ_C"/>
</dbReference>
<dbReference type="InterPro" id="IPR020603">
    <property type="entry name" value="MraZ_dom"/>
</dbReference>
<dbReference type="InterPro" id="IPR035642">
    <property type="entry name" value="MraZ_N"/>
</dbReference>
<dbReference type="InterPro" id="IPR038619">
    <property type="entry name" value="MraZ_sf"/>
</dbReference>
<dbReference type="InterPro" id="IPR007159">
    <property type="entry name" value="SpoVT-AbrB_dom"/>
</dbReference>
<dbReference type="InterPro" id="IPR037914">
    <property type="entry name" value="SpoVT-AbrB_sf"/>
</dbReference>
<dbReference type="NCBIfam" id="TIGR00242">
    <property type="entry name" value="division/cell wall cluster transcriptional repressor MraZ"/>
    <property type="match status" value="1"/>
</dbReference>
<dbReference type="PANTHER" id="PTHR34701">
    <property type="entry name" value="TRANSCRIPTIONAL REGULATOR MRAZ"/>
    <property type="match status" value="1"/>
</dbReference>
<dbReference type="PANTHER" id="PTHR34701:SF1">
    <property type="entry name" value="TRANSCRIPTIONAL REGULATOR MRAZ"/>
    <property type="match status" value="1"/>
</dbReference>
<dbReference type="Pfam" id="PF02381">
    <property type="entry name" value="MraZ"/>
    <property type="match status" value="2"/>
</dbReference>
<dbReference type="SUPFAM" id="SSF89447">
    <property type="entry name" value="AbrB/MazE/MraZ-like"/>
    <property type="match status" value="1"/>
</dbReference>
<dbReference type="PROSITE" id="PS51740">
    <property type="entry name" value="SPOVT_ABRB"/>
    <property type="match status" value="2"/>
</dbReference>
<accession>Q65JY9</accession>
<accession>Q62VE0</accession>
<name>MRAZ_BACLD</name>
<protein>
    <recommendedName>
        <fullName>Transcriptional regulator MraZ</fullName>
    </recommendedName>
</protein>
<organism>
    <name type="scientific">Bacillus licheniformis (strain ATCC 14580 / DSM 13 / JCM 2505 / CCUG 7422 / NBRC 12200 / NCIMB 9375 / NCTC 10341 / NRRL NRS-1264 / Gibson 46)</name>
    <dbReference type="NCBI Taxonomy" id="279010"/>
    <lineage>
        <taxon>Bacteria</taxon>
        <taxon>Bacillati</taxon>
        <taxon>Bacillota</taxon>
        <taxon>Bacilli</taxon>
        <taxon>Bacillales</taxon>
        <taxon>Bacillaceae</taxon>
        <taxon>Bacillus</taxon>
    </lineage>
</organism>
<reference key="1">
    <citation type="journal article" date="2004" name="J. Mol. Microbiol. Biotechnol.">
        <title>The complete genome sequence of Bacillus licheniformis DSM13, an organism with great industrial potential.</title>
        <authorList>
            <person name="Veith B."/>
            <person name="Herzberg C."/>
            <person name="Steckel S."/>
            <person name="Feesche J."/>
            <person name="Maurer K.H."/>
            <person name="Ehrenreich P."/>
            <person name="Baeumer S."/>
            <person name="Henne A."/>
            <person name="Liesegang H."/>
            <person name="Merkl R."/>
            <person name="Ehrenreich A."/>
            <person name="Gottschalk G."/>
        </authorList>
    </citation>
    <scope>NUCLEOTIDE SEQUENCE [LARGE SCALE GENOMIC DNA]</scope>
    <source>
        <strain>ATCC 14580 / DSM 13 / JCM 2505 / CCUG 7422 / NBRC 12200 / NCIMB 9375 / NCTC 10341 / NRRL NRS-1264 / Gibson 46</strain>
    </source>
</reference>
<reference key="2">
    <citation type="journal article" date="2004" name="Genome Biol.">
        <title>Complete genome sequence of the industrial bacterium Bacillus licheniformis and comparisons with closely related Bacillus species.</title>
        <authorList>
            <person name="Rey M.W."/>
            <person name="Ramaiya P."/>
            <person name="Nelson B.A."/>
            <person name="Brody-Karpin S.D."/>
            <person name="Zaretsky E.J."/>
            <person name="Tang M."/>
            <person name="Lopez de Leon A."/>
            <person name="Xiang H."/>
            <person name="Gusti V."/>
            <person name="Clausen I.G."/>
            <person name="Olsen P.B."/>
            <person name="Rasmussen M.D."/>
            <person name="Andersen J.T."/>
            <person name="Joergensen P.L."/>
            <person name="Larsen T.S."/>
            <person name="Sorokin A."/>
            <person name="Bolotin A."/>
            <person name="Lapidus A."/>
            <person name="Galleron N."/>
            <person name="Ehrlich S.D."/>
            <person name="Berka R.M."/>
        </authorList>
    </citation>
    <scope>NUCLEOTIDE SEQUENCE [LARGE SCALE GENOMIC DNA]</scope>
    <source>
        <strain>ATCC 14580 / DSM 13 / JCM 2505 / CCUG 7422 / NBRC 12200 / NCIMB 9375 / NCTC 10341 / NRRL NRS-1264 / Gibson 46</strain>
    </source>
</reference>
<gene>
    <name evidence="1" type="primary">mraZ</name>
    <name type="ordered locus">BLi01730</name>
    <name type="ordered locus">BL00851</name>
</gene>